<proteinExistence type="evidence at protein level"/>
<comment type="function">
    <text evidence="5">Snake venom phospholipase A2 (PLA2) that induces myonecrosis and edema upon subcutaneous injections in mice. In vitro, causes a potent blockade of neuromuscular transmission in young chicken biventer cervicis preparation and produces cytotoxicity in murine C2C12 skeletal muscle myotubes and lack cytolytic activity upon myoblasts in vitro. PLA2 catalyzes the calcium-dependent hydrolysis of the 2-acyl groups in 3-sn-phosphoglycerides.</text>
</comment>
<comment type="catalytic activity">
    <reaction evidence="3 4">
        <text>a 1,2-diacyl-sn-glycero-3-phosphocholine + H2O = a 1-acyl-sn-glycero-3-phosphocholine + a fatty acid + H(+)</text>
        <dbReference type="Rhea" id="RHEA:15801"/>
        <dbReference type="ChEBI" id="CHEBI:15377"/>
        <dbReference type="ChEBI" id="CHEBI:15378"/>
        <dbReference type="ChEBI" id="CHEBI:28868"/>
        <dbReference type="ChEBI" id="CHEBI:57643"/>
        <dbReference type="ChEBI" id="CHEBI:58168"/>
        <dbReference type="EC" id="3.1.1.4"/>
    </reaction>
</comment>
<comment type="cofactor">
    <cofactor evidence="1">
        <name>Ca(2+)</name>
        <dbReference type="ChEBI" id="CHEBI:29108"/>
    </cofactor>
    <text evidence="1">Binds 1 Ca(2+) ion.</text>
</comment>
<comment type="subcellular location">
    <subcellularLocation>
        <location>Secreted</location>
    </subcellularLocation>
</comment>
<comment type="tissue specificity">
    <text>Expressed by the venom gland.</text>
</comment>
<comment type="mass spectrometry"/>
<comment type="similarity">
    <text evidence="6">Belongs to the phospholipase A2 family. Group II subfamily. D49 sub-subfamily.</text>
</comment>
<dbReference type="EC" id="3.1.1.4"/>
<dbReference type="SMR" id="P0CAS4"/>
<dbReference type="GO" id="GO:0005576">
    <property type="term" value="C:extracellular region"/>
    <property type="evidence" value="ECO:0007669"/>
    <property type="project" value="UniProtKB-SubCell"/>
</dbReference>
<dbReference type="GO" id="GO:0005509">
    <property type="term" value="F:calcium ion binding"/>
    <property type="evidence" value="ECO:0007669"/>
    <property type="project" value="InterPro"/>
</dbReference>
<dbReference type="GO" id="GO:0047498">
    <property type="term" value="F:calcium-dependent phospholipase A2 activity"/>
    <property type="evidence" value="ECO:0007669"/>
    <property type="project" value="TreeGrafter"/>
</dbReference>
<dbReference type="GO" id="GO:0005543">
    <property type="term" value="F:phospholipid binding"/>
    <property type="evidence" value="ECO:0007669"/>
    <property type="project" value="TreeGrafter"/>
</dbReference>
<dbReference type="GO" id="GO:0090729">
    <property type="term" value="F:toxin activity"/>
    <property type="evidence" value="ECO:0007669"/>
    <property type="project" value="UniProtKB-KW"/>
</dbReference>
<dbReference type="GO" id="GO:0050482">
    <property type="term" value="P:arachidonate secretion"/>
    <property type="evidence" value="ECO:0007669"/>
    <property type="project" value="InterPro"/>
</dbReference>
<dbReference type="GO" id="GO:0016042">
    <property type="term" value="P:lipid catabolic process"/>
    <property type="evidence" value="ECO:0007669"/>
    <property type="project" value="UniProtKB-KW"/>
</dbReference>
<dbReference type="GO" id="GO:0042130">
    <property type="term" value="P:negative regulation of T cell proliferation"/>
    <property type="evidence" value="ECO:0007669"/>
    <property type="project" value="TreeGrafter"/>
</dbReference>
<dbReference type="GO" id="GO:0006644">
    <property type="term" value="P:phospholipid metabolic process"/>
    <property type="evidence" value="ECO:0007669"/>
    <property type="project" value="InterPro"/>
</dbReference>
<dbReference type="CDD" id="cd00125">
    <property type="entry name" value="PLA2c"/>
    <property type="match status" value="1"/>
</dbReference>
<dbReference type="FunFam" id="1.20.90.10:FF:000001">
    <property type="entry name" value="Basic phospholipase A2 homolog"/>
    <property type="match status" value="1"/>
</dbReference>
<dbReference type="Gene3D" id="1.20.90.10">
    <property type="entry name" value="Phospholipase A2 domain"/>
    <property type="match status" value="1"/>
</dbReference>
<dbReference type="InterPro" id="IPR001211">
    <property type="entry name" value="PLipase_A2"/>
</dbReference>
<dbReference type="InterPro" id="IPR033112">
    <property type="entry name" value="PLipase_A2_Asp_AS"/>
</dbReference>
<dbReference type="InterPro" id="IPR016090">
    <property type="entry name" value="PLipase_A2_dom"/>
</dbReference>
<dbReference type="InterPro" id="IPR036444">
    <property type="entry name" value="PLipase_A2_dom_sf"/>
</dbReference>
<dbReference type="InterPro" id="IPR033113">
    <property type="entry name" value="PLipase_A2_His_AS"/>
</dbReference>
<dbReference type="PANTHER" id="PTHR11716">
    <property type="entry name" value="PHOSPHOLIPASE A2 FAMILY MEMBER"/>
    <property type="match status" value="1"/>
</dbReference>
<dbReference type="PANTHER" id="PTHR11716:SF9">
    <property type="entry name" value="PHOSPHOLIPASE A2, MEMBRANE ASSOCIATED"/>
    <property type="match status" value="1"/>
</dbReference>
<dbReference type="Pfam" id="PF00068">
    <property type="entry name" value="Phospholip_A2_1"/>
    <property type="match status" value="1"/>
</dbReference>
<dbReference type="PRINTS" id="PR00389">
    <property type="entry name" value="PHPHLIPASEA2"/>
</dbReference>
<dbReference type="SMART" id="SM00085">
    <property type="entry name" value="PA2c"/>
    <property type="match status" value="1"/>
</dbReference>
<dbReference type="SUPFAM" id="SSF48619">
    <property type="entry name" value="Phospholipase A2, PLA2"/>
    <property type="match status" value="1"/>
</dbReference>
<dbReference type="PROSITE" id="PS00119">
    <property type="entry name" value="PA2_ASP"/>
    <property type="match status" value="1"/>
</dbReference>
<dbReference type="PROSITE" id="PS00118">
    <property type="entry name" value="PA2_HIS"/>
    <property type="match status" value="1"/>
</dbReference>
<feature type="chain" id="PRO_0000377504" description="Basic phospholipase A2 Cdr-13">
    <location>
        <begin position="1"/>
        <end position="122"/>
    </location>
</feature>
<feature type="active site" evidence="2">
    <location>
        <position position="47"/>
    </location>
</feature>
<feature type="active site" evidence="2">
    <location>
        <position position="89"/>
    </location>
</feature>
<feature type="binding site" evidence="2">
    <location>
        <position position="27"/>
    </location>
    <ligand>
        <name>Ca(2+)</name>
        <dbReference type="ChEBI" id="CHEBI:29108"/>
    </ligand>
</feature>
<feature type="binding site" evidence="2">
    <location>
        <position position="29"/>
    </location>
    <ligand>
        <name>Ca(2+)</name>
        <dbReference type="ChEBI" id="CHEBI:29108"/>
    </ligand>
</feature>
<feature type="binding site" evidence="2">
    <location>
        <position position="31"/>
    </location>
    <ligand>
        <name>Ca(2+)</name>
        <dbReference type="ChEBI" id="CHEBI:29108"/>
    </ligand>
</feature>
<feature type="binding site" evidence="2">
    <location>
        <position position="48"/>
    </location>
    <ligand>
        <name>Ca(2+)</name>
        <dbReference type="ChEBI" id="CHEBI:29108"/>
    </ligand>
</feature>
<feature type="disulfide bond" evidence="2">
    <location>
        <begin position="26"/>
        <end position="115"/>
    </location>
</feature>
<feature type="disulfide bond" evidence="2">
    <location>
        <begin position="28"/>
        <end position="44"/>
    </location>
</feature>
<feature type="disulfide bond" evidence="2">
    <location>
        <begin position="43"/>
        <end position="95"/>
    </location>
</feature>
<feature type="disulfide bond" evidence="2">
    <location>
        <begin position="49"/>
        <end position="122"/>
    </location>
</feature>
<feature type="disulfide bond" evidence="2">
    <location>
        <begin position="50"/>
        <end position="88"/>
    </location>
</feature>
<feature type="disulfide bond" evidence="2">
    <location>
        <begin position="57"/>
        <end position="81"/>
    </location>
</feature>
<feature type="disulfide bond" evidence="2">
    <location>
        <begin position="75"/>
        <end position="86"/>
    </location>
</feature>
<keyword id="KW-0106">Calcium</keyword>
<keyword id="KW-0903">Direct protein sequencing</keyword>
<keyword id="KW-1015">Disulfide bond</keyword>
<keyword id="KW-0378">Hydrolase</keyword>
<keyword id="KW-0442">Lipid degradation</keyword>
<keyword id="KW-0443">Lipid metabolism</keyword>
<keyword id="KW-0479">Metal-binding</keyword>
<keyword id="KW-0959">Myotoxin</keyword>
<keyword id="KW-0528">Neurotoxin</keyword>
<keyword id="KW-0964">Secreted</keyword>
<keyword id="KW-0800">Toxin</keyword>
<evidence type="ECO:0000250" key="1"/>
<evidence type="ECO:0000250" key="2">
    <source>
        <dbReference type="UniProtKB" id="P62022"/>
    </source>
</evidence>
<evidence type="ECO:0000255" key="3">
    <source>
        <dbReference type="PROSITE-ProRule" id="PRU10035"/>
    </source>
</evidence>
<evidence type="ECO:0000255" key="4">
    <source>
        <dbReference type="PROSITE-ProRule" id="PRU10036"/>
    </source>
</evidence>
<evidence type="ECO:0000269" key="5">
    <source>
    </source>
</evidence>
<evidence type="ECO:0000305" key="6"/>
<accession>P0CAS4</accession>
<reference key="1">
    <citation type="journal article" date="2007" name="Protein J.">
        <title>Biochemical, pharmacological and structural characterization of two PLA2 isoforms Cdr-12 and Cdr-13 from Crotalus durissus ruruima snake venom.</title>
        <authorList>
            <person name="Ponce-Soto L.A."/>
            <person name="Baldasso P.A."/>
            <person name="Romero-Vargas F.F."/>
            <person name="Winck F.V."/>
            <person name="Novello J.C."/>
            <person name="Marangoni S."/>
        </authorList>
    </citation>
    <scope>PROTEIN SEQUENCE</scope>
    <scope>FUNCTION</scope>
    <scope>MASS SPECTROMETRY</scope>
    <source>
        <tissue>Venom</tissue>
    </source>
</reference>
<name>PA2BD_CRODR</name>
<organism>
    <name type="scientific">Crotalus durissus ruruima</name>
    <name type="common">South American rattlesnake</name>
    <name type="synonym">Mt. Roraima rattlesnake</name>
    <dbReference type="NCBI Taxonomy" id="221570"/>
    <lineage>
        <taxon>Eukaryota</taxon>
        <taxon>Metazoa</taxon>
        <taxon>Chordata</taxon>
        <taxon>Craniata</taxon>
        <taxon>Vertebrata</taxon>
        <taxon>Euteleostomi</taxon>
        <taxon>Lepidosauria</taxon>
        <taxon>Squamata</taxon>
        <taxon>Bifurcata</taxon>
        <taxon>Unidentata</taxon>
        <taxon>Episquamata</taxon>
        <taxon>Toxicofera</taxon>
        <taxon>Serpentes</taxon>
        <taxon>Colubroidea</taxon>
        <taxon>Viperidae</taxon>
        <taxon>Crotalinae</taxon>
        <taxon>Crotalus</taxon>
    </lineage>
</organism>
<sequence>SLVQFEKMIKEETGKNAVPFYAFYGCYCGWGGRGRPKDATDRCCIVHDCCYEKLVKCNTKWDFYRYSLRSGYFQCGKGTWCEQQICECDRVAAECLRRSLSTYRYGKMIYPDSRCREPSETC</sequence>
<protein>
    <recommendedName>
        <fullName>Basic phospholipase A2 Cdr-13</fullName>
        <shortName>svPLA2</shortName>
        <ecNumber>3.1.1.4</ecNumber>
    </recommendedName>
    <alternativeName>
        <fullName>Phosphatidylcholine 2-acylhydrolase</fullName>
    </alternativeName>
</protein>